<keyword id="KW-0009">Actin-binding</keyword>
<keyword id="KW-0067">ATP-binding</keyword>
<keyword id="KW-0112">Calmodulin-binding</keyword>
<keyword id="KW-0175">Coiled coil</keyword>
<keyword id="KW-0963">Cytoplasm</keyword>
<keyword id="KW-0488">Methylation</keyword>
<keyword id="KW-0505">Motor protein</keyword>
<keyword id="KW-0514">Muscle protein</keyword>
<keyword id="KW-0518">Myosin</keyword>
<keyword id="KW-0547">Nucleotide-binding</keyword>
<keyword id="KW-1267">Proteomics identification</keyword>
<keyword id="KW-1185">Reference proteome</keyword>
<keyword id="KW-0787">Thick filament</keyword>
<name>MYH15_HUMAN</name>
<reference key="1">
    <citation type="journal article" date="1999" name="DNA Res.">
        <title>Prediction of the coding sequences of unidentified human genes. XIII. The complete sequences of 100 new cDNA clones from brain which code for large proteins in vitro.</title>
        <authorList>
            <person name="Nagase T."/>
            <person name="Ishikawa K."/>
            <person name="Suyama M."/>
            <person name="Kikuno R."/>
            <person name="Hirosawa M."/>
            <person name="Miyajima N."/>
            <person name="Tanaka A."/>
            <person name="Kotani H."/>
            <person name="Nomura N."/>
            <person name="Ohara O."/>
        </authorList>
    </citation>
    <scope>NUCLEOTIDE SEQUENCE [LARGE SCALE MRNA]</scope>
    <scope>VARIANT TYR-484</scope>
    <source>
        <tissue>Brain</tissue>
    </source>
</reference>
<reference key="2">
    <citation type="journal article" date="2006" name="Nature">
        <title>The DNA sequence, annotation and analysis of human chromosome 3.</title>
        <authorList>
            <person name="Muzny D.M."/>
            <person name="Scherer S.E."/>
            <person name="Kaul R."/>
            <person name="Wang J."/>
            <person name="Yu J."/>
            <person name="Sudbrak R."/>
            <person name="Buhay C.J."/>
            <person name="Chen R."/>
            <person name="Cree A."/>
            <person name="Ding Y."/>
            <person name="Dugan-Rocha S."/>
            <person name="Gill R."/>
            <person name="Gunaratne P."/>
            <person name="Harris R.A."/>
            <person name="Hawes A.C."/>
            <person name="Hernandez J."/>
            <person name="Hodgson A.V."/>
            <person name="Hume J."/>
            <person name="Jackson A."/>
            <person name="Khan Z.M."/>
            <person name="Kovar-Smith C."/>
            <person name="Lewis L.R."/>
            <person name="Lozado R.J."/>
            <person name="Metzker M.L."/>
            <person name="Milosavljevic A."/>
            <person name="Miner G.R."/>
            <person name="Morgan M.B."/>
            <person name="Nazareth L.V."/>
            <person name="Scott G."/>
            <person name="Sodergren E."/>
            <person name="Song X.-Z."/>
            <person name="Steffen D."/>
            <person name="Wei S."/>
            <person name="Wheeler D.A."/>
            <person name="Wright M.W."/>
            <person name="Worley K.C."/>
            <person name="Yuan Y."/>
            <person name="Zhang Z."/>
            <person name="Adams C.Q."/>
            <person name="Ansari-Lari M.A."/>
            <person name="Ayele M."/>
            <person name="Brown M.J."/>
            <person name="Chen G."/>
            <person name="Chen Z."/>
            <person name="Clendenning J."/>
            <person name="Clerc-Blankenburg K.P."/>
            <person name="Chen R."/>
            <person name="Chen Z."/>
            <person name="Davis C."/>
            <person name="Delgado O."/>
            <person name="Dinh H.H."/>
            <person name="Dong W."/>
            <person name="Draper H."/>
            <person name="Ernst S."/>
            <person name="Fu G."/>
            <person name="Gonzalez-Garay M.L."/>
            <person name="Garcia D.K."/>
            <person name="Gillett W."/>
            <person name="Gu J."/>
            <person name="Hao B."/>
            <person name="Haugen E."/>
            <person name="Havlak P."/>
            <person name="He X."/>
            <person name="Hennig S."/>
            <person name="Hu S."/>
            <person name="Huang W."/>
            <person name="Jackson L.R."/>
            <person name="Jacob L.S."/>
            <person name="Kelly S.H."/>
            <person name="Kube M."/>
            <person name="Levy R."/>
            <person name="Li Z."/>
            <person name="Liu B."/>
            <person name="Liu J."/>
            <person name="Liu W."/>
            <person name="Lu J."/>
            <person name="Maheshwari M."/>
            <person name="Nguyen B.-V."/>
            <person name="Okwuonu G.O."/>
            <person name="Palmeiri A."/>
            <person name="Pasternak S."/>
            <person name="Perez L.M."/>
            <person name="Phelps K.A."/>
            <person name="Plopper F.J."/>
            <person name="Qiang B."/>
            <person name="Raymond C."/>
            <person name="Rodriguez R."/>
            <person name="Saenphimmachak C."/>
            <person name="Santibanez J."/>
            <person name="Shen H."/>
            <person name="Shen Y."/>
            <person name="Subramanian S."/>
            <person name="Tabor P.E."/>
            <person name="Verduzco D."/>
            <person name="Waldron L."/>
            <person name="Wang J."/>
            <person name="Wang J."/>
            <person name="Wang Q."/>
            <person name="Williams G.A."/>
            <person name="Wong G.K.-S."/>
            <person name="Yao Z."/>
            <person name="Zhang J."/>
            <person name="Zhang X."/>
            <person name="Zhao G."/>
            <person name="Zhou J."/>
            <person name="Zhou Y."/>
            <person name="Nelson D."/>
            <person name="Lehrach H."/>
            <person name="Reinhardt R."/>
            <person name="Naylor S.L."/>
            <person name="Yang H."/>
            <person name="Olson M."/>
            <person name="Weinstock G."/>
            <person name="Gibbs R.A."/>
        </authorList>
    </citation>
    <scope>NUCLEOTIDE SEQUENCE [LARGE SCALE GENOMIC DNA]</scope>
</reference>
<reference key="3">
    <citation type="journal article" date="2002" name="Mol. Biol. Evol.">
        <title>Evolutionary implications of three novel members of the human sarcomeric myosin heavy chain gene family.</title>
        <authorList>
            <person name="Desjardins P.R."/>
            <person name="Burkman J.M."/>
            <person name="Shrager J.B."/>
            <person name="Allmond L.A."/>
            <person name="Stedman H.H."/>
        </authorList>
    </citation>
    <scope>IDENTIFICATION</scope>
</reference>
<reference key="4">
    <citation type="journal article" date="2008" name="Proc. Natl. Acad. Sci. U.S.A.">
        <title>A quantitative atlas of mitotic phosphorylation.</title>
        <authorList>
            <person name="Dephoure N."/>
            <person name="Zhou C."/>
            <person name="Villen J."/>
            <person name="Beausoleil S.A."/>
            <person name="Bakalarski C.E."/>
            <person name="Elledge S.J."/>
            <person name="Gygi S.P."/>
        </authorList>
    </citation>
    <scope>IDENTIFICATION BY MASS SPECTROMETRY [LARGE SCALE ANALYSIS]</scope>
    <source>
        <tissue>Cervix carcinoma</tissue>
    </source>
</reference>
<feature type="chain" id="PRO_0000274233" description="Myosin-15">
    <location>
        <begin position="1"/>
        <end position="1926"/>
    </location>
</feature>
<feature type="domain" description="Myosin N-terminal SH3-like" evidence="5">
    <location>
        <begin position="29"/>
        <end position="79"/>
    </location>
</feature>
<feature type="domain" description="Myosin motor" evidence="4">
    <location>
        <begin position="83"/>
        <end position="770"/>
    </location>
</feature>
<feature type="domain" description="IQ" evidence="3">
    <location>
        <begin position="773"/>
        <end position="802"/>
    </location>
</feature>
<feature type="region of interest" description="Actin-binding" evidence="4">
    <location>
        <begin position="647"/>
        <end position="669"/>
    </location>
</feature>
<feature type="region of interest" description="Actin-binding" evidence="1">
    <location>
        <begin position="749"/>
        <end position="763"/>
    </location>
</feature>
<feature type="coiled-coil region" evidence="2">
    <location>
        <begin position="833"/>
        <end position="1926"/>
    </location>
</feature>
<feature type="binding site" evidence="4">
    <location>
        <begin position="176"/>
        <end position="183"/>
    </location>
    <ligand>
        <name>ATP</name>
        <dbReference type="ChEBI" id="CHEBI:30616"/>
    </ligand>
</feature>
<feature type="modified residue" description="N6,N6,N6-trimethyllysine" evidence="2">
    <location>
        <position position="127"/>
    </location>
</feature>
<feature type="sequence variant" id="VAR_030235" description="In dbSNP:rs4299484.">
    <original>R</original>
    <variation>Q</variation>
    <location>
        <position position="434"/>
    </location>
</feature>
<feature type="sequence variant" id="VAR_030236" description="In dbSNP:rs9868484." evidence="6">
    <original>H</original>
    <variation>Y</variation>
    <location>
        <position position="484"/>
    </location>
</feature>
<feature type="sequence variant" id="VAR_030237" description="In dbSNP:rs12638212.">
    <original>T</original>
    <variation>I</variation>
    <location>
        <position position="929"/>
    </location>
</feature>
<feature type="sequence variant" id="VAR_030238" description="In dbSNP:rs3900940.">
    <original>T</original>
    <variation>A</variation>
    <location>
        <position position="1105"/>
    </location>
</feature>
<feature type="sequence variant" id="VAR_046376" description="In dbSNP:rs1078456.">
    <original>D</original>
    <variation>N</variation>
    <location>
        <position position="1447"/>
    </location>
</feature>
<evidence type="ECO:0000250" key="1"/>
<evidence type="ECO:0000255" key="2"/>
<evidence type="ECO:0000255" key="3">
    <source>
        <dbReference type="PROSITE-ProRule" id="PRU00116"/>
    </source>
</evidence>
<evidence type="ECO:0000255" key="4">
    <source>
        <dbReference type="PROSITE-ProRule" id="PRU00782"/>
    </source>
</evidence>
<evidence type="ECO:0000255" key="5">
    <source>
        <dbReference type="PROSITE-ProRule" id="PRU01190"/>
    </source>
</evidence>
<evidence type="ECO:0000269" key="6">
    <source>
    </source>
</evidence>
<evidence type="ECO:0000305" key="7"/>
<gene>
    <name type="primary">MYH15</name>
    <name type="synonym">KIAA1000</name>
</gene>
<comment type="function">
    <text evidence="1">Muscle contraction.</text>
</comment>
<comment type="subunit">
    <text evidence="1">Muscle myosin is a hexameric protein that consists of 2 heavy chain subunits (MHC), 2 alkali light chain subunits (MLC) and 2 regulatory light chain subunits (MLC-2).</text>
</comment>
<comment type="subcellular location">
    <subcellularLocation>
        <location>Cytoplasm</location>
        <location>Myofibril</location>
    </subcellularLocation>
    <text>Thick filaments of the myofibrils.</text>
</comment>
<comment type="domain">
    <text evidence="1">The rodlike tail sequence is highly repetitive, showing cycles of a 28-residue repeat pattern composed of 4 heptapeptides, characteristic for alpha-helical coiled coils.</text>
</comment>
<comment type="similarity">
    <text evidence="7">Belongs to the TRAFAC class myosin-kinesin ATPase superfamily. Myosin family.</text>
</comment>
<comment type="caution">
    <text evidence="7">Represents a conventional myosin. This protein should not be confused with the unconventional myosin-15 (MYO15).</text>
</comment>
<comment type="sequence caution" evidence="7">
    <conflict type="erroneous initiation">
        <sequence resource="EMBL-CDS" id="BAA76844"/>
    </conflict>
    <text>Extended N-terminus.</text>
</comment>
<protein>
    <recommendedName>
        <fullName>Myosin-15</fullName>
    </recommendedName>
    <alternativeName>
        <fullName>Myosin heavy chain 15</fullName>
    </alternativeName>
</protein>
<organism>
    <name type="scientific">Homo sapiens</name>
    <name type="common">Human</name>
    <dbReference type="NCBI Taxonomy" id="9606"/>
    <lineage>
        <taxon>Eukaryota</taxon>
        <taxon>Metazoa</taxon>
        <taxon>Chordata</taxon>
        <taxon>Craniata</taxon>
        <taxon>Vertebrata</taxon>
        <taxon>Euteleostomi</taxon>
        <taxon>Mammalia</taxon>
        <taxon>Eutheria</taxon>
        <taxon>Euarchontoglires</taxon>
        <taxon>Primates</taxon>
        <taxon>Haplorrhini</taxon>
        <taxon>Catarrhini</taxon>
        <taxon>Hominidae</taxon>
        <taxon>Homo</taxon>
    </lineage>
</organism>
<accession>Q9Y2K3</accession>
<dbReference type="EMBL" id="AB023217">
    <property type="protein sequence ID" value="BAA76844.3"/>
    <property type="status" value="ALT_INIT"/>
    <property type="molecule type" value="mRNA"/>
</dbReference>
<dbReference type="EMBL" id="AC069499">
    <property type="status" value="NOT_ANNOTATED_CDS"/>
    <property type="molecule type" value="Genomic_DNA"/>
</dbReference>
<dbReference type="CCDS" id="CCDS43127.2"/>
<dbReference type="RefSeq" id="NP_055796.2">
    <property type="nucleotide sequence ID" value="NM_014981.3"/>
</dbReference>
<dbReference type="SMR" id="Q9Y2K3"/>
<dbReference type="BioGRID" id="116637">
    <property type="interactions" value="21"/>
</dbReference>
<dbReference type="FunCoup" id="Q9Y2K3">
    <property type="interactions" value="21"/>
</dbReference>
<dbReference type="IntAct" id="Q9Y2K3">
    <property type="interactions" value="7"/>
</dbReference>
<dbReference type="STRING" id="9606.ENSP00000273353"/>
<dbReference type="CarbonylDB" id="Q9Y2K3"/>
<dbReference type="iPTMnet" id="Q9Y2K3"/>
<dbReference type="PhosphoSitePlus" id="Q9Y2K3"/>
<dbReference type="BioMuta" id="MYH15"/>
<dbReference type="DMDM" id="296439498"/>
<dbReference type="jPOST" id="Q9Y2K3"/>
<dbReference type="MassIVE" id="Q9Y2K3"/>
<dbReference type="PaxDb" id="9606-ENSP00000273353"/>
<dbReference type="PeptideAtlas" id="Q9Y2K3"/>
<dbReference type="ProteomicsDB" id="85823"/>
<dbReference type="Antibodypedia" id="46526">
    <property type="antibodies" value="62 antibodies from 21 providers"/>
</dbReference>
<dbReference type="DNASU" id="22989"/>
<dbReference type="Ensembl" id="ENST00000273353.5">
    <property type="protein sequence ID" value="ENSP00000273353.4"/>
    <property type="gene ID" value="ENSG00000144821.11"/>
</dbReference>
<dbReference type="Ensembl" id="ENST00000693548.1">
    <property type="protein sequence ID" value="ENSP00000508967.1"/>
    <property type="gene ID" value="ENSG00000144821.11"/>
</dbReference>
<dbReference type="GeneID" id="22989"/>
<dbReference type="KEGG" id="hsa:22989"/>
<dbReference type="MANE-Select" id="ENST00000693548.1">
    <property type="protein sequence ID" value="ENSP00000508967.1"/>
    <property type="RefSeq nucleotide sequence ID" value="NM_014981.3"/>
    <property type="RefSeq protein sequence ID" value="NP_055796.2"/>
</dbReference>
<dbReference type="UCSC" id="uc003dxa.1">
    <property type="organism name" value="human"/>
</dbReference>
<dbReference type="AGR" id="HGNC:31073"/>
<dbReference type="CTD" id="22989"/>
<dbReference type="DisGeNET" id="22989"/>
<dbReference type="GeneCards" id="MYH15"/>
<dbReference type="HGNC" id="HGNC:31073">
    <property type="gene designation" value="MYH15"/>
</dbReference>
<dbReference type="HPA" id="ENSG00000144821">
    <property type="expression patterns" value="Tissue enhanced (brain, retina, tongue)"/>
</dbReference>
<dbReference type="MIM" id="609929">
    <property type="type" value="gene"/>
</dbReference>
<dbReference type="neXtProt" id="NX_Q9Y2K3"/>
<dbReference type="OpenTargets" id="ENSG00000144821"/>
<dbReference type="PharmGKB" id="PA134958635"/>
<dbReference type="VEuPathDB" id="HostDB:ENSG00000144821"/>
<dbReference type="eggNOG" id="KOG0161">
    <property type="taxonomic scope" value="Eukaryota"/>
</dbReference>
<dbReference type="GeneTree" id="ENSGT00940000160318"/>
<dbReference type="HOGENOM" id="CLU_000192_8_1_1"/>
<dbReference type="InParanoid" id="Q9Y2K3"/>
<dbReference type="OrthoDB" id="10258119at2759"/>
<dbReference type="PAN-GO" id="Q9Y2K3">
    <property type="GO annotations" value="5 GO annotations based on evolutionary models"/>
</dbReference>
<dbReference type="PhylomeDB" id="Q9Y2K3"/>
<dbReference type="TreeFam" id="TF314375"/>
<dbReference type="PathwayCommons" id="Q9Y2K3"/>
<dbReference type="SignaLink" id="Q9Y2K3"/>
<dbReference type="BioGRID-ORCS" id="22989">
    <property type="hits" value="13 hits in 1147 CRISPR screens"/>
</dbReference>
<dbReference type="ChiTaRS" id="MYH15">
    <property type="organism name" value="human"/>
</dbReference>
<dbReference type="GeneWiki" id="MYH15"/>
<dbReference type="GenomeRNAi" id="22989"/>
<dbReference type="Pharos" id="Q9Y2K3">
    <property type="development level" value="Tbio"/>
</dbReference>
<dbReference type="PRO" id="PR:Q9Y2K3"/>
<dbReference type="Proteomes" id="UP000005640">
    <property type="component" value="Chromosome 3"/>
</dbReference>
<dbReference type="RNAct" id="Q9Y2K3">
    <property type="molecule type" value="protein"/>
</dbReference>
<dbReference type="Bgee" id="ENSG00000144821">
    <property type="expression patterns" value="Expressed in paraflocculus and 104 other cell types or tissues"/>
</dbReference>
<dbReference type="GO" id="GO:0005737">
    <property type="term" value="C:cytoplasm"/>
    <property type="evidence" value="ECO:0000318"/>
    <property type="project" value="GO_Central"/>
</dbReference>
<dbReference type="GO" id="GO:0005829">
    <property type="term" value="C:cytosol"/>
    <property type="evidence" value="ECO:0000314"/>
    <property type="project" value="HPA"/>
</dbReference>
<dbReference type="GO" id="GO:0043231">
    <property type="term" value="C:intracellular membrane-bounded organelle"/>
    <property type="evidence" value="ECO:0000314"/>
    <property type="project" value="HPA"/>
</dbReference>
<dbReference type="GO" id="GO:0030016">
    <property type="term" value="C:myofibril"/>
    <property type="evidence" value="ECO:0007669"/>
    <property type="project" value="UniProtKB-SubCell"/>
</dbReference>
<dbReference type="GO" id="GO:0032982">
    <property type="term" value="C:myosin filament"/>
    <property type="evidence" value="ECO:0000318"/>
    <property type="project" value="GO_Central"/>
</dbReference>
<dbReference type="GO" id="GO:0016460">
    <property type="term" value="C:myosin II complex"/>
    <property type="evidence" value="ECO:0000318"/>
    <property type="project" value="GO_Central"/>
</dbReference>
<dbReference type="GO" id="GO:0051015">
    <property type="term" value="F:actin filament binding"/>
    <property type="evidence" value="ECO:0000318"/>
    <property type="project" value="GO_Central"/>
</dbReference>
<dbReference type="GO" id="GO:0005524">
    <property type="term" value="F:ATP binding"/>
    <property type="evidence" value="ECO:0007669"/>
    <property type="project" value="UniProtKB-KW"/>
</dbReference>
<dbReference type="GO" id="GO:0005516">
    <property type="term" value="F:calmodulin binding"/>
    <property type="evidence" value="ECO:0007669"/>
    <property type="project" value="UniProtKB-KW"/>
</dbReference>
<dbReference type="GO" id="GO:0000146">
    <property type="term" value="F:microfilament motor activity"/>
    <property type="evidence" value="ECO:0000318"/>
    <property type="project" value="GO_Central"/>
</dbReference>
<dbReference type="GO" id="GO:0002074">
    <property type="term" value="P:extraocular skeletal muscle development"/>
    <property type="evidence" value="ECO:0007669"/>
    <property type="project" value="Ensembl"/>
</dbReference>
<dbReference type="CDD" id="cd14929">
    <property type="entry name" value="MYSc_Myh15_mammals"/>
    <property type="match status" value="1"/>
</dbReference>
<dbReference type="FunFam" id="1.10.10.820:FF:000001">
    <property type="entry name" value="Myosin heavy chain"/>
    <property type="match status" value="1"/>
</dbReference>
<dbReference type="FunFam" id="1.20.5.370:FF:000001">
    <property type="entry name" value="Myosin heavy chain"/>
    <property type="match status" value="1"/>
</dbReference>
<dbReference type="FunFam" id="1.20.5.4820:FF:000001">
    <property type="entry name" value="Myosin heavy chain"/>
    <property type="match status" value="1"/>
</dbReference>
<dbReference type="FunFam" id="1.20.58.530:FF:000001">
    <property type="entry name" value="Myosin heavy chain"/>
    <property type="match status" value="1"/>
</dbReference>
<dbReference type="FunFam" id="2.30.30.360:FF:000001">
    <property type="entry name" value="Myosin heavy chain"/>
    <property type="match status" value="1"/>
</dbReference>
<dbReference type="FunFam" id="1.20.5.340:FF:000019">
    <property type="entry name" value="Myosin heavy chain, isoform G"/>
    <property type="match status" value="1"/>
</dbReference>
<dbReference type="FunFam" id="1.20.120.720:FF:000001">
    <property type="entry name" value="Myosin heavy chain, muscle"/>
    <property type="match status" value="1"/>
</dbReference>
<dbReference type="FunFam" id="3.40.850.10:FF:000101">
    <property type="entry name" value="Slow myosin heavy chain 2"/>
    <property type="match status" value="1"/>
</dbReference>
<dbReference type="Gene3D" id="1.10.10.820">
    <property type="match status" value="1"/>
</dbReference>
<dbReference type="Gene3D" id="1.20.5.340">
    <property type="match status" value="4"/>
</dbReference>
<dbReference type="Gene3D" id="1.20.5.370">
    <property type="match status" value="5"/>
</dbReference>
<dbReference type="Gene3D" id="1.20.5.4820">
    <property type="match status" value="1"/>
</dbReference>
<dbReference type="Gene3D" id="1.20.58.530">
    <property type="match status" value="1"/>
</dbReference>
<dbReference type="Gene3D" id="3.40.850.10">
    <property type="entry name" value="Kinesin motor domain"/>
    <property type="match status" value="1"/>
</dbReference>
<dbReference type="Gene3D" id="2.30.30.360">
    <property type="entry name" value="Myosin S1 fragment, N-terminal"/>
    <property type="match status" value="1"/>
</dbReference>
<dbReference type="Gene3D" id="1.20.120.720">
    <property type="entry name" value="Myosin VI head, motor domain, U50 subdomain"/>
    <property type="match status" value="1"/>
</dbReference>
<dbReference type="InterPro" id="IPR036961">
    <property type="entry name" value="Kinesin_motor_dom_sf"/>
</dbReference>
<dbReference type="InterPro" id="IPR001609">
    <property type="entry name" value="Myosin_head_motor_dom-like"/>
</dbReference>
<dbReference type="InterPro" id="IPR004009">
    <property type="entry name" value="Myosin_N"/>
</dbReference>
<dbReference type="InterPro" id="IPR008989">
    <property type="entry name" value="Myosin_S1_N"/>
</dbReference>
<dbReference type="InterPro" id="IPR002928">
    <property type="entry name" value="Myosin_tail"/>
</dbReference>
<dbReference type="InterPro" id="IPR027417">
    <property type="entry name" value="P-loop_NTPase"/>
</dbReference>
<dbReference type="InterPro" id="IPR014751">
    <property type="entry name" value="XRCC4-like_C"/>
</dbReference>
<dbReference type="PANTHER" id="PTHR45615">
    <property type="entry name" value="MYOSIN HEAVY CHAIN, NON-MUSCLE"/>
    <property type="match status" value="1"/>
</dbReference>
<dbReference type="PANTHER" id="PTHR45615:SF26">
    <property type="entry name" value="MYOSIN-15"/>
    <property type="match status" value="1"/>
</dbReference>
<dbReference type="Pfam" id="PF00063">
    <property type="entry name" value="Myosin_head"/>
    <property type="match status" value="1"/>
</dbReference>
<dbReference type="Pfam" id="PF02736">
    <property type="entry name" value="Myosin_N"/>
    <property type="match status" value="1"/>
</dbReference>
<dbReference type="Pfam" id="PF01576">
    <property type="entry name" value="Myosin_tail_1"/>
    <property type="match status" value="1"/>
</dbReference>
<dbReference type="PRINTS" id="PR00193">
    <property type="entry name" value="MYOSINHEAVY"/>
</dbReference>
<dbReference type="SMART" id="SM00242">
    <property type="entry name" value="MYSc"/>
    <property type="match status" value="1"/>
</dbReference>
<dbReference type="SUPFAM" id="SSF90257">
    <property type="entry name" value="Myosin rod fragments"/>
    <property type="match status" value="4"/>
</dbReference>
<dbReference type="SUPFAM" id="SSF52540">
    <property type="entry name" value="P-loop containing nucleoside triphosphate hydrolases"/>
    <property type="match status" value="1"/>
</dbReference>
<dbReference type="SUPFAM" id="SSF57997">
    <property type="entry name" value="Tropomyosin"/>
    <property type="match status" value="1"/>
</dbReference>
<dbReference type="PROSITE" id="PS51456">
    <property type="entry name" value="MYOSIN_MOTOR"/>
    <property type="match status" value="1"/>
</dbReference>
<dbReference type="PROSITE" id="PS51844">
    <property type="entry name" value="SH3_LIKE"/>
    <property type="match status" value="1"/>
</dbReference>
<proteinExistence type="evidence at protein level"/>
<sequence>MDLSDLGEAAAFLRRSEAELLLLQATALDGKKKCWIPDGENAYIEAEVKGSEDDGTVIVETADGESLSIKEDKIQQMNPPEFEMIEDMAMLTHLNEASVLHTLKRRYGQWMIYTYSGLFCVTINPYKWLPVYQKEVMAAYKGKRRSEAPPHIFAVANNAFQDMLHNRENQSILFTGESGAGKTVNSKHIIQYFATIAAMIESRKKQGALEDQIMQANTILEAFGNAKTLRNDNSSRFGKFIRMHFGARGMLSSVDIDIYLLEKSRVIFQQAGERNYHIFYQILSGQKELHDLLLVSANPSDFHFCSCGAVTVESLDDAEELLATEQAMDILGFLPDEKYGCYKLTGAIMHFGNMKFKQKPREEQLEADGTENADKAAFLMGINSSELVKCLIHPRIKVGNEYVTRGQTIEQVTCAVGALSKSMYERMFKWLVARINRALDAKLSRQFFIGILDITGFEILEYNSLEQLCINFTNEKLQQFFNWHMFVLEQEEYKKESIEWVSIGFGLDLQACIDLIEKPMGILSILEEECMFPKATDLTFKTKLFDNHFGKSVHLQKPKPDKKKFEAHFELVHYAGVVPYNISGWLEKNKDLLNETVVAVFQKSSNRLLASLFENYMSTDSAIPFGEKKRKKGASFQTVASLHKENLNKLMTNLKSTAPHFVRCINPNVNKIPGILDPYLVLQQLRCNGVLEGTRICREGFPNRLQYADFKQRYCILNPRTFPKSKFVSSRKAAEELLGSLEIDHTQYRFGITKVFFKAGFLGQLEAIRDERLSKVFTLFQARAQGKLMRIKFQKILEERDALILIQWNIRAFMAVKNWPWMRLFFKIKPLVKSSEVGEEVAGLKEECAQLQKALEKSEFQREELKAKQVSLTQEKNDLILQLQAEQETLANVEEQCEWLIKSKIQLEARVKELSERVEEEEEINSELTARGRKLEDECFELKKEIDDLETMLVKSEKEKRTTEHKVKNLTEEVEFLNEDISKLNRAAKVVQEAHQQTLDDLHMEEEKLSSLSKANLKLEQQVDELEGALEQERKARMNCERELHKLEGNLKLNRESMENLESSQRHLAEELRKKELELSQMNSKVENEKGLVAQLQKTVKELQTQIKDLKEKLEAERTTRAKMERERADLTQDLADLNERLEEVGGSSLAQLEITKKQETKFQKLHRDMEEATLHFETTSASLKKRHADSLAELEGQVENLQQVKQKLEKDKSDLQLEVDDLLTRVEQMTRAKANAEKLCTLYEERLHEATAKLDKVTQLANDLAAQKTKLWSESGEFLRRLEEKEALINQLSREKSNFTRQIEDLRGQLEKETKSQSALAHALQKAQRDCDLLREQYEEEQEVKAELHRTLSKVNAEMVQWRMKYENNVIQRTEDLEDAKKELAIRLQEAAEAMGVANARNASLERARHQLQLELGDALSDLGKVRSAAARLDQKQLQSGKALADWKQKHEESQALLDASQKEVQALSTELLKLKNTYEESIVGQETLRRENKNLQEEISNLTNQVREGTKNLTEMEKVKKLIEEEKTEVQVTLEETEGALERNESKILHFQLELLEAKAELERKLSEKDEEIENFRRKQQCTIDSLQSSLDSEAKSRIEVTRLKKKMEEDLNEMELQLSCANRQVSEATKSLGQLQIQIKDLQMQLDDSTQLNSDLKEQVAVAERRNSLLQSELEDLRSLQEQTERGRRLSEEELLEATERINLFYTQNTSLLSQKKKLEADVARMQKEAEEVVQECQNAEEKAKKAAIEAANLSEELKKKQDTIAHLERTRENMEQTITDLQKRLAEAEQMALMGSRKQIQKLESRVRELEGELEGEIRRSAEAQRGARRLERCIKELTYQAEEDKKNLSRMQTQMDKLQLKVQNYKQQVEVAETQANQYLSKYKKQQHELNEVKERAEVAESQVNKLKIKAREFGKKVQEE</sequence>